<protein>
    <recommendedName>
        <fullName>Mesoderm-specific transcript homolog protein</fullName>
        <ecNumber>3.-.-.-</ecNumber>
    </recommendedName>
    <alternativeName>
        <fullName>Paternally-expressed gene 1 protein</fullName>
    </alternativeName>
</protein>
<dbReference type="EC" id="3.-.-.-"/>
<dbReference type="EMBL" id="BC133639">
    <property type="protein sequence ID" value="AAI33640.1"/>
    <property type="molecule type" value="mRNA"/>
</dbReference>
<dbReference type="EMBL" id="AY957983">
    <property type="protein sequence ID" value="ABD34311.1"/>
    <property type="molecule type" value="mRNA"/>
</dbReference>
<dbReference type="EMBL" id="AY376068">
    <property type="protein sequence ID" value="AAR04853.1"/>
    <property type="molecule type" value="mRNA"/>
</dbReference>
<dbReference type="EMBL" id="AY376069">
    <property type="protein sequence ID" value="AAR04854.1"/>
    <property type="molecule type" value="mRNA"/>
</dbReference>
<dbReference type="RefSeq" id="NP_001076837.1">
    <molecule id="Q2HJM9-1"/>
    <property type="nucleotide sequence ID" value="NM_001083368.1"/>
</dbReference>
<dbReference type="SMR" id="Q2HJM9"/>
<dbReference type="FunCoup" id="Q2HJM9">
    <property type="interactions" value="121"/>
</dbReference>
<dbReference type="STRING" id="9913.ENSBTAP00000042286"/>
<dbReference type="ESTHER" id="bovin-q2hjm9">
    <property type="family name" value="MEST-like"/>
</dbReference>
<dbReference type="PaxDb" id="9913-ENSBTAP00000042286"/>
<dbReference type="GeneID" id="404180"/>
<dbReference type="KEGG" id="bta:404180"/>
<dbReference type="CTD" id="4232"/>
<dbReference type="eggNOG" id="KOG4178">
    <property type="taxonomic scope" value="Eukaryota"/>
</dbReference>
<dbReference type="InParanoid" id="Q2HJM9"/>
<dbReference type="OrthoDB" id="7130006at2759"/>
<dbReference type="Proteomes" id="UP000009136">
    <property type="component" value="Unplaced"/>
</dbReference>
<dbReference type="GO" id="GO:0005783">
    <property type="term" value="C:endoplasmic reticulum"/>
    <property type="evidence" value="ECO:0000250"/>
    <property type="project" value="UniProtKB"/>
</dbReference>
<dbReference type="GO" id="GO:0005789">
    <property type="term" value="C:endoplasmic reticulum membrane"/>
    <property type="evidence" value="ECO:0007669"/>
    <property type="project" value="UniProtKB-SubCell"/>
</dbReference>
<dbReference type="GO" id="GO:0016787">
    <property type="term" value="F:hydrolase activity"/>
    <property type="evidence" value="ECO:0007669"/>
    <property type="project" value="UniProtKB-KW"/>
</dbReference>
<dbReference type="FunFam" id="3.40.50.1820:FF:000041">
    <property type="entry name" value="Mesoderm-specific transcript homolog protein"/>
    <property type="match status" value="1"/>
</dbReference>
<dbReference type="Gene3D" id="3.40.50.1820">
    <property type="entry name" value="alpha/beta hydrolase"/>
    <property type="match status" value="1"/>
</dbReference>
<dbReference type="InterPro" id="IPR000073">
    <property type="entry name" value="AB_hydrolase_1"/>
</dbReference>
<dbReference type="InterPro" id="IPR029058">
    <property type="entry name" value="AB_hydrolase_fold"/>
</dbReference>
<dbReference type="InterPro" id="IPR050266">
    <property type="entry name" value="AB_hydrolase_sf"/>
</dbReference>
<dbReference type="InterPro" id="IPR000639">
    <property type="entry name" value="Epox_hydrolase-like"/>
</dbReference>
<dbReference type="PANTHER" id="PTHR43798:SF33">
    <property type="entry name" value="HYDROLASE, PUTATIVE (AFU_ORTHOLOGUE AFUA_2G14860)-RELATED"/>
    <property type="match status" value="1"/>
</dbReference>
<dbReference type="PANTHER" id="PTHR43798">
    <property type="entry name" value="MONOACYLGLYCEROL LIPASE"/>
    <property type="match status" value="1"/>
</dbReference>
<dbReference type="Pfam" id="PF00561">
    <property type="entry name" value="Abhydrolase_1"/>
    <property type="match status" value="1"/>
</dbReference>
<dbReference type="PRINTS" id="PR00412">
    <property type="entry name" value="EPOXHYDRLASE"/>
</dbReference>
<dbReference type="SUPFAM" id="SSF53474">
    <property type="entry name" value="alpha/beta-Hydrolases"/>
    <property type="match status" value="1"/>
</dbReference>
<keyword id="KW-0025">Alternative splicing</keyword>
<keyword id="KW-0256">Endoplasmic reticulum</keyword>
<keyword id="KW-0378">Hydrolase</keyword>
<keyword id="KW-0472">Membrane</keyword>
<keyword id="KW-1185">Reference proteome</keyword>
<keyword id="KW-0812">Transmembrane</keyword>
<keyword id="KW-1133">Transmembrane helix</keyword>
<proteinExistence type="evidence at transcript level"/>
<gene>
    <name type="primary">MEST</name>
    <name type="synonym">PEG1</name>
</gene>
<accession>Q2HJM9</accession>
<accession>A3KN56</accession>
<accession>Q6U8D3</accession>
<accession>Q6U8D4</accession>
<evidence type="ECO:0000250" key="1"/>
<evidence type="ECO:0000255" key="2"/>
<evidence type="ECO:0000269" key="3">
    <source>
    </source>
</evidence>
<evidence type="ECO:0000303" key="4">
    <source>
    </source>
</evidence>
<evidence type="ECO:0000305" key="5"/>
<organism>
    <name type="scientific">Bos taurus</name>
    <name type="common">Bovine</name>
    <dbReference type="NCBI Taxonomy" id="9913"/>
    <lineage>
        <taxon>Eukaryota</taxon>
        <taxon>Metazoa</taxon>
        <taxon>Chordata</taxon>
        <taxon>Craniata</taxon>
        <taxon>Vertebrata</taxon>
        <taxon>Euteleostomi</taxon>
        <taxon>Mammalia</taxon>
        <taxon>Eutheria</taxon>
        <taxon>Laurasiatheria</taxon>
        <taxon>Artiodactyla</taxon>
        <taxon>Ruminantia</taxon>
        <taxon>Pecora</taxon>
        <taxon>Bovidae</taxon>
        <taxon>Bovinae</taxon>
        <taxon>Bos</taxon>
    </lineage>
</organism>
<name>MEST_BOVIN</name>
<feature type="chain" id="PRO_0000284417" description="Mesoderm-specific transcript homolog protein">
    <location>
        <begin position="1"/>
        <end position="335"/>
    </location>
</feature>
<feature type="transmembrane region" description="Helical" evidence="2">
    <location>
        <begin position="13"/>
        <end position="33"/>
    </location>
</feature>
<feature type="transmembrane region" description="Helical" evidence="2">
    <location>
        <begin position="88"/>
        <end position="108"/>
    </location>
</feature>
<feature type="transmembrane region" description="Helical" evidence="2">
    <location>
        <begin position="266"/>
        <end position="286"/>
    </location>
</feature>
<feature type="domain" description="AB hydrolase-1" evidence="2">
    <location>
        <begin position="71"/>
        <end position="310"/>
    </location>
</feature>
<feature type="short sequence motif" description="RVIALD">
    <location>
        <begin position="98"/>
        <end position="103"/>
    </location>
</feature>
<feature type="splice variant" id="VSP_024535" description="In isoform 2." evidence="4">
    <location>
        <begin position="1"/>
        <end position="9"/>
    </location>
</feature>
<feature type="sequence conflict" description="In Ref. 2; ABD34311." evidence="5" ref="2">
    <original>S</original>
    <variation>R</variation>
    <location>
        <position position="95"/>
    </location>
</feature>
<feature type="sequence conflict" description="In Ref. 3; AAR04854." evidence="5" ref="3">
    <original>S</original>
    <variation>P</variation>
    <location>
        <position position="214"/>
    </location>
</feature>
<feature type="sequence conflict" description="In Ref. 3; AAR04854." evidence="5" ref="3">
    <original>R</original>
    <variation>P</variation>
    <location>
        <position position="240"/>
    </location>
</feature>
<reference key="1">
    <citation type="submission" date="2007-03" db="EMBL/GenBank/DDBJ databases">
        <authorList>
            <consortium name="NIH - Mammalian Gene Collection (MGC) project"/>
        </authorList>
    </citation>
    <scope>NUCLEOTIDE SEQUENCE [LARGE SCALE MRNA] (ISOFORM 1)</scope>
    <source>
        <strain>Hereford</strain>
        <tissue>Fetal spinal cord</tissue>
    </source>
</reference>
<reference key="2">
    <citation type="submission" date="2005-03" db="EMBL/GenBank/DDBJ databases">
        <title>Peg1.</title>
        <authorList>
            <person name="Yang L."/>
            <person name="Curchoe C."/>
            <person name="Tian X.C."/>
        </authorList>
    </citation>
    <scope>NUCLEOTIDE SEQUENCE [MRNA] OF 3-335 (ISOFORM 1)</scope>
</reference>
<reference key="3">
    <citation type="journal article" date="2004" name="Biol. Reprod.">
        <title>Analysis of imprinted messenger RNA expression during bovine preimplantation development.</title>
        <authorList>
            <person name="Ruddock N.T."/>
            <person name="Wilson K.J."/>
            <person name="Cooney M.A."/>
            <person name="Korfiatis N.A."/>
            <person name="Tecirlioglu R.T."/>
            <person name="French A.J."/>
        </authorList>
    </citation>
    <scope>NUCLEOTIDE SEQUENCE [MRNA] OF 10-253 (ISOFORMS 1 AND 2)</scope>
    <scope>ALTERNATIVE SPLICING</scope>
    <scope>TISSUE SPECIFICITY</scope>
</reference>
<sequence length="335" mass="38724">MVRRDRLRRMREWWVQVGLLAVPLLAAYLHIPPPQLSPALHSWKSSGKFFTYKGLRIFYQDSVGVVGSPEIVVLLHGFPTSSYDWYKIWEGLTLSFHRVIALDFLGFGFSDKPRPHHYSIFEQASIVEALLRHLGLQSRRINLLSHDYGDTVAQELLYRFKQNRSGRLTIKSLCLSNGGIFPETHRPLLLQKLLKDGGMLSPILTRLMNFFVFSRGLTPVFGPYTRPSESELWDMWAGIRNNDGNLVIDSLLQYINQRKKFRRRWVGALASVSIPIHFIYGPLDPVNPYPEFLELYRKTLPRSTVSILDDHISHYPQLEDPMGFLNAYMGFINSF</sequence>
<comment type="subcellular location">
    <subcellularLocation>
        <location evidence="1">Endoplasmic reticulum membrane</location>
        <topology evidence="1">Multi-pass membrane protein</topology>
    </subcellularLocation>
</comment>
<comment type="alternative products">
    <event type="alternative splicing"/>
    <isoform>
        <id>Q2HJM9-1</id>
        <name>1</name>
        <sequence type="displayed"/>
    </isoform>
    <isoform>
        <id>Q2HJM9-2</id>
        <name>2</name>
        <sequence type="described" ref="VSP_024535"/>
    </isoform>
</comment>
<comment type="tissue specificity">
    <text evidence="3">No detectable transcripts during preimplantation development. Isoform 1 was not detected in either in vitro-matured oocytes (IVF) or parthenogenetically activated (PA) blastocyst. Isoform 2 was expressed in IVF and PA blastocysts.</text>
</comment>
<comment type="similarity">
    <text evidence="5">Belongs to the AB hydrolase superfamily.</text>
</comment>